<accession>B2U942</accession>
<gene>
    <name evidence="1" type="primary">thrB</name>
    <name type="ordered locus">Rpic_2438</name>
</gene>
<proteinExistence type="inferred from homology"/>
<keyword id="KW-0028">Amino-acid biosynthesis</keyword>
<keyword id="KW-0067">ATP-binding</keyword>
<keyword id="KW-0418">Kinase</keyword>
<keyword id="KW-0547">Nucleotide-binding</keyword>
<keyword id="KW-0791">Threonine biosynthesis</keyword>
<keyword id="KW-0808">Transferase</keyword>
<reference key="1">
    <citation type="submission" date="2008-05" db="EMBL/GenBank/DDBJ databases">
        <title>Complete sequence of chromosome 1 of Ralstonia pickettii 12J.</title>
        <authorList>
            <person name="Lucas S."/>
            <person name="Copeland A."/>
            <person name="Lapidus A."/>
            <person name="Glavina del Rio T."/>
            <person name="Dalin E."/>
            <person name="Tice H."/>
            <person name="Bruce D."/>
            <person name="Goodwin L."/>
            <person name="Pitluck S."/>
            <person name="Meincke L."/>
            <person name="Brettin T."/>
            <person name="Detter J.C."/>
            <person name="Han C."/>
            <person name="Kuske C.R."/>
            <person name="Schmutz J."/>
            <person name="Larimer F."/>
            <person name="Land M."/>
            <person name="Hauser L."/>
            <person name="Kyrpides N."/>
            <person name="Mikhailova N."/>
            <person name="Marsh T."/>
            <person name="Richardson P."/>
        </authorList>
    </citation>
    <scope>NUCLEOTIDE SEQUENCE [LARGE SCALE GENOMIC DNA]</scope>
    <source>
        <strain>12J</strain>
    </source>
</reference>
<feature type="chain" id="PRO_1000115438" description="Homoserine kinase">
    <location>
        <begin position="1"/>
        <end position="334"/>
    </location>
</feature>
<protein>
    <recommendedName>
        <fullName evidence="1">Homoserine kinase</fullName>
        <shortName evidence="1">HK</shortName>
        <shortName evidence="1">HSK</shortName>
        <ecNumber evidence="1">2.7.1.39</ecNumber>
    </recommendedName>
</protein>
<name>KHSE_RALPJ</name>
<evidence type="ECO:0000255" key="1">
    <source>
        <dbReference type="HAMAP-Rule" id="MF_00301"/>
    </source>
</evidence>
<comment type="catalytic activity">
    <reaction evidence="1">
        <text>L-homoserine + ATP = O-phospho-L-homoserine + ADP + H(+)</text>
        <dbReference type="Rhea" id="RHEA:13985"/>
        <dbReference type="ChEBI" id="CHEBI:15378"/>
        <dbReference type="ChEBI" id="CHEBI:30616"/>
        <dbReference type="ChEBI" id="CHEBI:57476"/>
        <dbReference type="ChEBI" id="CHEBI:57590"/>
        <dbReference type="ChEBI" id="CHEBI:456216"/>
        <dbReference type="EC" id="2.7.1.39"/>
    </reaction>
</comment>
<comment type="pathway">
    <text evidence="1">Amino-acid biosynthesis; L-threonine biosynthesis; L-threonine from L-aspartate: step 4/5.</text>
</comment>
<comment type="similarity">
    <text evidence="1">Belongs to the pseudomonas-type ThrB family.</text>
</comment>
<dbReference type="EC" id="2.7.1.39" evidence="1"/>
<dbReference type="EMBL" id="CP001068">
    <property type="protein sequence ID" value="ACD27572.1"/>
    <property type="molecule type" value="Genomic_DNA"/>
</dbReference>
<dbReference type="SMR" id="B2U942"/>
<dbReference type="STRING" id="402626.Rpic_2438"/>
<dbReference type="KEGG" id="rpi:Rpic_2438"/>
<dbReference type="eggNOG" id="COG2334">
    <property type="taxonomic scope" value="Bacteria"/>
</dbReference>
<dbReference type="HOGENOM" id="CLU_053300_0_0_4"/>
<dbReference type="UniPathway" id="UPA00050">
    <property type="reaction ID" value="UER00064"/>
</dbReference>
<dbReference type="GO" id="GO:0005524">
    <property type="term" value="F:ATP binding"/>
    <property type="evidence" value="ECO:0007669"/>
    <property type="project" value="UniProtKB-KW"/>
</dbReference>
<dbReference type="GO" id="GO:0004413">
    <property type="term" value="F:homoserine kinase activity"/>
    <property type="evidence" value="ECO:0007669"/>
    <property type="project" value="UniProtKB-UniRule"/>
</dbReference>
<dbReference type="GO" id="GO:0009088">
    <property type="term" value="P:threonine biosynthetic process"/>
    <property type="evidence" value="ECO:0007669"/>
    <property type="project" value="UniProtKB-UniRule"/>
</dbReference>
<dbReference type="CDD" id="cd05153">
    <property type="entry name" value="HomoserineK_II"/>
    <property type="match status" value="1"/>
</dbReference>
<dbReference type="Gene3D" id="3.90.1200.10">
    <property type="match status" value="1"/>
</dbReference>
<dbReference type="Gene3D" id="3.30.200.20">
    <property type="entry name" value="Phosphorylase Kinase, domain 1"/>
    <property type="match status" value="1"/>
</dbReference>
<dbReference type="HAMAP" id="MF_00301">
    <property type="entry name" value="Homoser_kinase_2"/>
    <property type="match status" value="1"/>
</dbReference>
<dbReference type="InterPro" id="IPR002575">
    <property type="entry name" value="Aminoglycoside_PTrfase"/>
</dbReference>
<dbReference type="InterPro" id="IPR005280">
    <property type="entry name" value="Homoserine_kinase_II"/>
</dbReference>
<dbReference type="InterPro" id="IPR011009">
    <property type="entry name" value="Kinase-like_dom_sf"/>
</dbReference>
<dbReference type="InterPro" id="IPR050249">
    <property type="entry name" value="Pseudomonas-type_ThrB"/>
</dbReference>
<dbReference type="NCBIfam" id="NF003558">
    <property type="entry name" value="PRK05231.1"/>
    <property type="match status" value="1"/>
</dbReference>
<dbReference type="NCBIfam" id="TIGR00938">
    <property type="entry name" value="thrB_alt"/>
    <property type="match status" value="1"/>
</dbReference>
<dbReference type="PANTHER" id="PTHR21064:SF6">
    <property type="entry name" value="AMINOGLYCOSIDE PHOSPHOTRANSFERASE DOMAIN-CONTAINING PROTEIN"/>
    <property type="match status" value="1"/>
</dbReference>
<dbReference type="PANTHER" id="PTHR21064">
    <property type="entry name" value="AMINOGLYCOSIDE PHOSPHOTRANSFERASE DOMAIN-CONTAINING PROTEIN-RELATED"/>
    <property type="match status" value="1"/>
</dbReference>
<dbReference type="Pfam" id="PF01636">
    <property type="entry name" value="APH"/>
    <property type="match status" value="1"/>
</dbReference>
<dbReference type="SUPFAM" id="SSF56112">
    <property type="entry name" value="Protein kinase-like (PK-like)"/>
    <property type="match status" value="1"/>
</dbReference>
<sequence length="334" mass="37994">MAVFTPVSDAEIALWLDQYDVGAVRAFRGIPSGIENSNFFLTTEKDGQTHEYVVTLFERLTFEQLPFYLYLMQHLAQHDISVPAPIPGRDGEILRTLNGKPATIVTRLAGRSNLAPTVSECGIVGDMLARMHLAGRDYPRHQPNLRSLPWWNEVVPDVVPFVHGDTRALLENELAHQQRFFASADYAALPEGPCHCDLFRDNVLFEPAADGQPERLGGFFDFYFAGVDKWLFDVAVTVNDWCIDLATGVLDTERTRAMLHAYHAVRPFTDAETRHWQDMLRAAAYRFWVSRLWDFYLPRDAELLKPHDPTHFERVLRERVGAGALTLDLPQPCN</sequence>
<organism>
    <name type="scientific">Ralstonia pickettii (strain 12J)</name>
    <dbReference type="NCBI Taxonomy" id="402626"/>
    <lineage>
        <taxon>Bacteria</taxon>
        <taxon>Pseudomonadati</taxon>
        <taxon>Pseudomonadota</taxon>
        <taxon>Betaproteobacteria</taxon>
        <taxon>Burkholderiales</taxon>
        <taxon>Burkholderiaceae</taxon>
        <taxon>Ralstonia</taxon>
    </lineage>
</organism>